<accession>A4RJH4</accession>
<accession>G4MW74</accession>
<organism>
    <name type="scientific">Pyricularia oryzae (strain 70-15 / ATCC MYA-4617 / FGSC 8958)</name>
    <name type="common">Rice blast fungus</name>
    <name type="synonym">Magnaporthe oryzae</name>
    <dbReference type="NCBI Taxonomy" id="242507"/>
    <lineage>
        <taxon>Eukaryota</taxon>
        <taxon>Fungi</taxon>
        <taxon>Dikarya</taxon>
        <taxon>Ascomycota</taxon>
        <taxon>Pezizomycotina</taxon>
        <taxon>Sordariomycetes</taxon>
        <taxon>Sordariomycetidae</taxon>
        <taxon>Magnaporthales</taxon>
        <taxon>Pyriculariaceae</taxon>
        <taxon>Pyricularia</taxon>
    </lineage>
</organism>
<protein>
    <recommendedName>
        <fullName>Pro-apoptotic serine protease NMA111</fullName>
        <ecNumber>3.4.21.-</ecNumber>
    </recommendedName>
</protein>
<comment type="function">
    <text evidence="1">Nuclear serine protease which mediates apoptosis.</text>
</comment>
<comment type="subcellular location">
    <subcellularLocation>
        <location evidence="1">Nucleus</location>
    </subcellularLocation>
</comment>
<comment type="similarity">
    <text evidence="4">Belongs to the peptidase S1C family.</text>
</comment>
<comment type="sequence caution" evidence="4">
    <conflict type="erroneous initiation">
        <sequence resource="EMBL-CDS" id="EHA55034"/>
    </conflict>
    <text>Extended N-terminus.</text>
</comment>
<evidence type="ECO:0000250" key="1"/>
<evidence type="ECO:0000255" key="2"/>
<evidence type="ECO:0000256" key="3">
    <source>
        <dbReference type="SAM" id="MobiDB-lite"/>
    </source>
</evidence>
<evidence type="ECO:0000305" key="4"/>
<name>NM111_PYRO7</name>
<proteinExistence type="inferred from homology"/>
<gene>
    <name type="primary">NMA111</name>
    <name type="ORF">MGG_01824</name>
</gene>
<reference key="1">
    <citation type="journal article" date="2005" name="Nature">
        <title>The genome sequence of the rice blast fungus Magnaporthe grisea.</title>
        <authorList>
            <person name="Dean R.A."/>
            <person name="Talbot N.J."/>
            <person name="Ebbole D.J."/>
            <person name="Farman M.L."/>
            <person name="Mitchell T.K."/>
            <person name="Orbach M.J."/>
            <person name="Thon M.R."/>
            <person name="Kulkarni R."/>
            <person name="Xu J.-R."/>
            <person name="Pan H."/>
            <person name="Read N.D."/>
            <person name="Lee Y.-H."/>
            <person name="Carbone I."/>
            <person name="Brown D."/>
            <person name="Oh Y.Y."/>
            <person name="Donofrio N."/>
            <person name="Jeong J.S."/>
            <person name="Soanes D.M."/>
            <person name="Djonovic S."/>
            <person name="Kolomiets E."/>
            <person name="Rehmeyer C."/>
            <person name="Li W."/>
            <person name="Harding M."/>
            <person name="Kim S."/>
            <person name="Lebrun M.-H."/>
            <person name="Bohnert H."/>
            <person name="Coughlan S."/>
            <person name="Butler J."/>
            <person name="Calvo S.E."/>
            <person name="Ma L.-J."/>
            <person name="Nicol R."/>
            <person name="Purcell S."/>
            <person name="Nusbaum C."/>
            <person name="Galagan J.E."/>
            <person name="Birren B.W."/>
        </authorList>
    </citation>
    <scope>NUCLEOTIDE SEQUENCE [LARGE SCALE GENOMIC DNA]</scope>
    <source>
        <strain>70-15 / ATCC MYA-4617 / FGSC 8958</strain>
    </source>
</reference>
<keyword id="KW-0053">Apoptosis</keyword>
<keyword id="KW-0378">Hydrolase</keyword>
<keyword id="KW-0539">Nucleus</keyword>
<keyword id="KW-0645">Protease</keyword>
<keyword id="KW-1185">Reference proteome</keyword>
<keyword id="KW-0677">Repeat</keyword>
<keyword id="KW-0720">Serine protease</keyword>
<sequence length="1029" mass="113492">MNGPTSQRAKRKQGSASSLDDRPPKHQRALNGAKQQSTGDNTPEEDMYDQGLDDEDLLAQALLPSVGPDTVEWQATIQKVVSNVVSIRFCQTCSFDTDAALTSEATGFVVDAERGYILTNRHVVGSGPFWGYCIFDNHEEVDAYPVYRDPVHDFGILKFDPKAIKYMPVAALPLRPDLAKVGVEIRVVGNDAGEKLSILSGVISRLDRNAPEYGEGYSDFNTCYYQASAAASGGSSGSPVVNIDGFAVALQAGGRADGASTDYFLPLDRPLRALQCLQQGKPITRGDIQCQFLLKPFDECRRLGLAPEWEAQMRKAFPKETNLLVAEIILPEGPSSNKVEEGDVLLKVNEELITEFIRLDDILDSNVGKPVKLLLQRGGEDVEVEVDVGDLHSITPDRFVSVAGGSFHSLSYQQARLYGVACKGVYVCEATGSFRFETSDNGWILQTIDNKKVPDLETFIQVVKNIPDKARVVVTYKHLRDLHTLNTTIIYVDRHWSSKMKLAVRNDDTGLWDFTDLADALPPVPPVPRKASFIQLEHTSHPAVAELVRSFVHVTCTMPMKLDGFPKNRKWGMGLVIDAEKGLVVISRAIVPYDLCDISITIGESIVVEGKVVFLHPLQNYAIIQYDPKLVDAPVQSAKLSSEEITQGASTYFIGYNRIGRVVHTATTVTEIFAVAIPANSGAPRYRAVNVDAITVDTNLSGQCGSGVLVAPDGTVQALWLTYLGERSPSTHRDEEYHLGLATPTLLPVVKQIQQGIVPKLRMLSVEFRSIQMAQARIMGVSEEWIQQVSLANTSHHQLFMVTKRTFERDQDENSGALLEGDILLTLNDKLITRISELDIMYSHEFLGAVIVRETKELKLKLPTVAADDVETDHAVSFCGAIFHRPHQAVRQQISKLYSEVYVSARTRGSPSYQYGLAPTNFITHVNGKRTPDLKTFLAAVTAIPDNTYFRLKAVTFDSVPWVVTMKKNEHYFPTVEWIKDSSEDCGWRRVTYEGGKAMEGEPSEGVPAVEEEAGGAVDDDVPMAAVEK</sequence>
<dbReference type="EC" id="3.4.21.-"/>
<dbReference type="EMBL" id="CM001232">
    <property type="protein sequence ID" value="EHA55034.1"/>
    <property type="status" value="ALT_INIT"/>
    <property type="molecule type" value="Genomic_DNA"/>
</dbReference>
<dbReference type="RefSeq" id="XP_003714841.1">
    <property type="nucleotide sequence ID" value="XM_003714793.1"/>
</dbReference>
<dbReference type="SMR" id="A4RJH4"/>
<dbReference type="FunCoup" id="A4RJH4">
    <property type="interactions" value="138"/>
</dbReference>
<dbReference type="STRING" id="242507.A4RJH4"/>
<dbReference type="GeneID" id="2679201"/>
<dbReference type="KEGG" id="mgr:MGG_01824"/>
<dbReference type="eggNOG" id="KOG1421">
    <property type="taxonomic scope" value="Eukaryota"/>
</dbReference>
<dbReference type="InParanoid" id="A4RJH4"/>
<dbReference type="OrthoDB" id="4217619at2759"/>
<dbReference type="Proteomes" id="UP000009058">
    <property type="component" value="Chromosome 2"/>
</dbReference>
<dbReference type="GO" id="GO:0005634">
    <property type="term" value="C:nucleus"/>
    <property type="evidence" value="ECO:0007669"/>
    <property type="project" value="UniProtKB-SubCell"/>
</dbReference>
<dbReference type="GO" id="GO:0004252">
    <property type="term" value="F:serine-type endopeptidase activity"/>
    <property type="evidence" value="ECO:0007669"/>
    <property type="project" value="InterPro"/>
</dbReference>
<dbReference type="GO" id="GO:0006915">
    <property type="term" value="P:apoptotic process"/>
    <property type="evidence" value="ECO:0007669"/>
    <property type="project" value="UniProtKB-KW"/>
</dbReference>
<dbReference type="GO" id="GO:0006508">
    <property type="term" value="P:proteolysis"/>
    <property type="evidence" value="ECO:0007669"/>
    <property type="project" value="UniProtKB-KW"/>
</dbReference>
<dbReference type="CDD" id="cd06786">
    <property type="entry name" value="cpPDZ1_ScNma111-like"/>
    <property type="match status" value="1"/>
</dbReference>
<dbReference type="CDD" id="cd06719">
    <property type="entry name" value="PDZ2-4_Nma111p-like"/>
    <property type="match status" value="2"/>
</dbReference>
<dbReference type="Gene3D" id="2.30.42.10">
    <property type="match status" value="1"/>
</dbReference>
<dbReference type="Gene3D" id="2.40.10.120">
    <property type="match status" value="2"/>
</dbReference>
<dbReference type="InterPro" id="IPR025926">
    <property type="entry name" value="PDZ-like_dom"/>
</dbReference>
<dbReference type="InterPro" id="IPR036034">
    <property type="entry name" value="PDZ_sf"/>
</dbReference>
<dbReference type="InterPro" id="IPR009003">
    <property type="entry name" value="Peptidase_S1_PA"/>
</dbReference>
<dbReference type="InterPro" id="IPR001940">
    <property type="entry name" value="Peptidase_S1C"/>
</dbReference>
<dbReference type="PANTHER" id="PTHR46366">
    <property type="entry name" value="PRO-APOPTOTIC SERINE PROTEASE NMA111"/>
    <property type="match status" value="1"/>
</dbReference>
<dbReference type="PANTHER" id="PTHR46366:SF8">
    <property type="entry name" value="PRO-APOPTOTIC SERINE PROTEASE NMA111"/>
    <property type="match status" value="1"/>
</dbReference>
<dbReference type="Pfam" id="PF12812">
    <property type="entry name" value="PDZ_1"/>
    <property type="match status" value="2"/>
</dbReference>
<dbReference type="Pfam" id="PF13365">
    <property type="entry name" value="Trypsin_2"/>
    <property type="match status" value="1"/>
</dbReference>
<dbReference type="PRINTS" id="PR00834">
    <property type="entry name" value="PROTEASES2C"/>
</dbReference>
<dbReference type="SUPFAM" id="SSF50156">
    <property type="entry name" value="PDZ domain-like"/>
    <property type="match status" value="2"/>
</dbReference>
<dbReference type="SUPFAM" id="SSF50494">
    <property type="entry name" value="Trypsin-like serine proteases"/>
    <property type="match status" value="2"/>
</dbReference>
<feature type="chain" id="PRO_0000320355" description="Pro-apoptotic serine protease NMA111">
    <location>
        <begin position="1"/>
        <end position="1029"/>
    </location>
</feature>
<feature type="domain" description="PDZ 1">
    <location>
        <begin position="307"/>
        <end position="379"/>
    </location>
</feature>
<feature type="domain" description="PDZ 2">
    <location>
        <begin position="845"/>
        <end position="958"/>
    </location>
</feature>
<feature type="region of interest" description="Disordered" evidence="3">
    <location>
        <begin position="1"/>
        <end position="49"/>
    </location>
</feature>
<feature type="region of interest" description="Serine protease">
    <location>
        <begin position="84"/>
        <end position="274"/>
    </location>
</feature>
<feature type="region of interest" description="Disordered" evidence="3">
    <location>
        <begin position="997"/>
        <end position="1029"/>
    </location>
</feature>
<feature type="compositionally biased region" description="Acidic residues" evidence="3">
    <location>
        <begin position="1010"/>
        <end position="1022"/>
    </location>
</feature>
<feature type="active site" description="Charge relay system" evidence="2">
    <location>
        <position position="122"/>
    </location>
</feature>
<feature type="active site" description="Charge relay system" evidence="2">
    <location>
        <position position="153"/>
    </location>
</feature>
<feature type="active site" description="Charge relay system" evidence="2">
    <location>
        <position position="235"/>
    </location>
</feature>